<name>ISPD_PROMS</name>
<reference key="1">
    <citation type="journal article" date="2007" name="PLoS Genet.">
        <title>Patterns and implications of gene gain and loss in the evolution of Prochlorococcus.</title>
        <authorList>
            <person name="Kettler G.C."/>
            <person name="Martiny A.C."/>
            <person name="Huang K."/>
            <person name="Zucker J."/>
            <person name="Coleman M.L."/>
            <person name="Rodrigue S."/>
            <person name="Chen F."/>
            <person name="Lapidus A."/>
            <person name="Ferriera S."/>
            <person name="Johnson J."/>
            <person name="Steglich C."/>
            <person name="Church G.M."/>
            <person name="Richardson P."/>
            <person name="Chisholm S.W."/>
        </authorList>
    </citation>
    <scope>NUCLEOTIDE SEQUENCE [LARGE SCALE GENOMIC DNA]</scope>
    <source>
        <strain>AS9601</strain>
    </source>
</reference>
<feature type="chain" id="PRO_1000022937" description="2-C-methyl-D-erythritol 4-phosphate cytidylyltransferase">
    <location>
        <begin position="1"/>
        <end position="223"/>
    </location>
</feature>
<feature type="site" description="Transition state stabilizer" evidence="1">
    <location>
        <position position="13"/>
    </location>
</feature>
<feature type="site" description="Transition state stabilizer" evidence="1">
    <location>
        <position position="20"/>
    </location>
</feature>
<feature type="site" description="Positions MEP for the nucleophilic attack" evidence="1">
    <location>
        <position position="150"/>
    </location>
</feature>
<feature type="site" description="Positions MEP for the nucleophilic attack" evidence="1">
    <location>
        <position position="206"/>
    </location>
</feature>
<keyword id="KW-0414">Isoprene biosynthesis</keyword>
<keyword id="KW-0548">Nucleotidyltransferase</keyword>
<keyword id="KW-0808">Transferase</keyword>
<proteinExistence type="inferred from homology"/>
<protein>
    <recommendedName>
        <fullName evidence="1">2-C-methyl-D-erythritol 4-phosphate cytidylyltransferase</fullName>
        <ecNumber evidence="1">2.7.7.60</ecNumber>
    </recommendedName>
    <alternativeName>
        <fullName evidence="1">4-diphosphocytidyl-2C-methyl-D-erythritol synthase</fullName>
    </alternativeName>
    <alternativeName>
        <fullName evidence="1">MEP cytidylyltransferase</fullName>
        <shortName evidence="1">MCT</shortName>
    </alternativeName>
</protein>
<accession>A2BPT7</accession>
<gene>
    <name evidence="1" type="primary">ispD</name>
    <name type="ordered locus">A9601_05101</name>
</gene>
<dbReference type="EC" id="2.7.7.60" evidence="1"/>
<dbReference type="EMBL" id="CP000551">
    <property type="protein sequence ID" value="ABM69798.1"/>
    <property type="molecule type" value="Genomic_DNA"/>
</dbReference>
<dbReference type="RefSeq" id="WP_011817966.1">
    <property type="nucleotide sequence ID" value="NC_008816.1"/>
</dbReference>
<dbReference type="SMR" id="A2BPT7"/>
<dbReference type="STRING" id="146891.A9601_05101"/>
<dbReference type="KEGG" id="pmb:A9601_05101"/>
<dbReference type="eggNOG" id="COG1211">
    <property type="taxonomic scope" value="Bacteria"/>
</dbReference>
<dbReference type="HOGENOM" id="CLU_061281_1_0_3"/>
<dbReference type="OrthoDB" id="9806837at2"/>
<dbReference type="UniPathway" id="UPA00056">
    <property type="reaction ID" value="UER00093"/>
</dbReference>
<dbReference type="Proteomes" id="UP000002590">
    <property type="component" value="Chromosome"/>
</dbReference>
<dbReference type="GO" id="GO:0050518">
    <property type="term" value="F:2-C-methyl-D-erythritol 4-phosphate cytidylyltransferase activity"/>
    <property type="evidence" value="ECO:0007669"/>
    <property type="project" value="UniProtKB-UniRule"/>
</dbReference>
<dbReference type="GO" id="GO:0019288">
    <property type="term" value="P:isopentenyl diphosphate biosynthetic process, methylerythritol 4-phosphate pathway"/>
    <property type="evidence" value="ECO:0007669"/>
    <property type="project" value="UniProtKB-UniRule"/>
</dbReference>
<dbReference type="CDD" id="cd02516">
    <property type="entry name" value="CDP-ME_synthetase"/>
    <property type="match status" value="1"/>
</dbReference>
<dbReference type="FunFam" id="3.90.550.10:FF:000003">
    <property type="entry name" value="2-C-methyl-D-erythritol 4-phosphate cytidylyltransferase"/>
    <property type="match status" value="1"/>
</dbReference>
<dbReference type="Gene3D" id="3.90.550.10">
    <property type="entry name" value="Spore Coat Polysaccharide Biosynthesis Protein SpsA, Chain A"/>
    <property type="match status" value="1"/>
</dbReference>
<dbReference type="HAMAP" id="MF_00108">
    <property type="entry name" value="IspD"/>
    <property type="match status" value="1"/>
</dbReference>
<dbReference type="InterPro" id="IPR001228">
    <property type="entry name" value="IspD"/>
</dbReference>
<dbReference type="InterPro" id="IPR034683">
    <property type="entry name" value="IspD/TarI"/>
</dbReference>
<dbReference type="InterPro" id="IPR050088">
    <property type="entry name" value="IspD/TarI_cytidylyltransf_bact"/>
</dbReference>
<dbReference type="InterPro" id="IPR018294">
    <property type="entry name" value="ISPD_synthase_CS"/>
</dbReference>
<dbReference type="InterPro" id="IPR029044">
    <property type="entry name" value="Nucleotide-diphossugar_trans"/>
</dbReference>
<dbReference type="NCBIfam" id="TIGR00453">
    <property type="entry name" value="ispD"/>
    <property type="match status" value="1"/>
</dbReference>
<dbReference type="PANTHER" id="PTHR32125">
    <property type="entry name" value="2-C-METHYL-D-ERYTHRITOL 4-PHOSPHATE CYTIDYLYLTRANSFERASE, CHLOROPLASTIC"/>
    <property type="match status" value="1"/>
</dbReference>
<dbReference type="PANTHER" id="PTHR32125:SF4">
    <property type="entry name" value="2-C-METHYL-D-ERYTHRITOL 4-PHOSPHATE CYTIDYLYLTRANSFERASE, CHLOROPLASTIC"/>
    <property type="match status" value="1"/>
</dbReference>
<dbReference type="Pfam" id="PF01128">
    <property type="entry name" value="IspD"/>
    <property type="match status" value="1"/>
</dbReference>
<dbReference type="SUPFAM" id="SSF53448">
    <property type="entry name" value="Nucleotide-diphospho-sugar transferases"/>
    <property type="match status" value="1"/>
</dbReference>
<dbReference type="PROSITE" id="PS01295">
    <property type="entry name" value="ISPD"/>
    <property type="match status" value="1"/>
</dbReference>
<sequence>MHFLIPAAGSGSRMKAGKNKLLIDLEGESLIYWTLKSVLSANSTNWVGIIGQPKDKNLLLNSAKDFAQKVHWINGGDTRQQSVFNGLEALPKDAKKVLIHDGARCLINPELIDLCAKQLDENEAVILATKVTDTIKIVDKEGFIKETPDRNYLWAAQTPQGFLVDRLKKAHKMAIDKKWKVTDDASLFEILNWKVKIIEGTYSNIKITSPIDLKIAKLFVKNP</sequence>
<comment type="function">
    <text evidence="1">Catalyzes the formation of 4-diphosphocytidyl-2-C-methyl-D-erythritol from CTP and 2-C-methyl-D-erythritol 4-phosphate (MEP).</text>
</comment>
<comment type="catalytic activity">
    <reaction evidence="1">
        <text>2-C-methyl-D-erythritol 4-phosphate + CTP + H(+) = 4-CDP-2-C-methyl-D-erythritol + diphosphate</text>
        <dbReference type="Rhea" id="RHEA:13429"/>
        <dbReference type="ChEBI" id="CHEBI:15378"/>
        <dbReference type="ChEBI" id="CHEBI:33019"/>
        <dbReference type="ChEBI" id="CHEBI:37563"/>
        <dbReference type="ChEBI" id="CHEBI:57823"/>
        <dbReference type="ChEBI" id="CHEBI:58262"/>
        <dbReference type="EC" id="2.7.7.60"/>
    </reaction>
</comment>
<comment type="pathway">
    <text evidence="1">Isoprenoid biosynthesis; isopentenyl diphosphate biosynthesis via DXP pathway; isopentenyl diphosphate from 1-deoxy-D-xylulose 5-phosphate: step 2/6.</text>
</comment>
<comment type="similarity">
    <text evidence="1">Belongs to the IspD/TarI cytidylyltransferase family. IspD subfamily.</text>
</comment>
<evidence type="ECO:0000255" key="1">
    <source>
        <dbReference type="HAMAP-Rule" id="MF_00108"/>
    </source>
</evidence>
<organism>
    <name type="scientific">Prochlorococcus marinus (strain AS9601)</name>
    <dbReference type="NCBI Taxonomy" id="146891"/>
    <lineage>
        <taxon>Bacteria</taxon>
        <taxon>Bacillati</taxon>
        <taxon>Cyanobacteriota</taxon>
        <taxon>Cyanophyceae</taxon>
        <taxon>Synechococcales</taxon>
        <taxon>Prochlorococcaceae</taxon>
        <taxon>Prochlorococcus</taxon>
    </lineage>
</organism>